<protein>
    <recommendedName>
        <fullName>Testis-expressed protein 29</fullName>
    </recommendedName>
</protein>
<name>TEX29_MOUSE</name>
<feature type="chain" id="PRO_0000358917" description="Testis-expressed protein 29">
    <location>
        <begin position="1"/>
        <end position="186"/>
    </location>
</feature>
<feature type="topological domain" description="Extracellular" evidence="1">
    <location>
        <begin position="1"/>
        <end position="56"/>
    </location>
</feature>
<feature type="transmembrane region" description="Helical" evidence="1">
    <location>
        <begin position="57"/>
        <end position="77"/>
    </location>
</feature>
<feature type="topological domain" description="Cytoplasmic" evidence="1">
    <location>
        <begin position="78"/>
        <end position="151"/>
    </location>
</feature>
<feature type="region of interest" description="Disordered" evidence="2">
    <location>
        <begin position="104"/>
        <end position="138"/>
    </location>
</feature>
<feature type="region of interest" description="Disordered" evidence="2">
    <location>
        <begin position="151"/>
        <end position="186"/>
    </location>
</feature>
<feature type="compositionally biased region" description="Pro residues" evidence="2">
    <location>
        <begin position="108"/>
        <end position="133"/>
    </location>
</feature>
<organism>
    <name type="scientific">Mus musculus</name>
    <name type="common">Mouse</name>
    <dbReference type="NCBI Taxonomy" id="10090"/>
    <lineage>
        <taxon>Eukaryota</taxon>
        <taxon>Metazoa</taxon>
        <taxon>Chordata</taxon>
        <taxon>Craniata</taxon>
        <taxon>Vertebrata</taxon>
        <taxon>Euteleostomi</taxon>
        <taxon>Mammalia</taxon>
        <taxon>Eutheria</taxon>
        <taxon>Euarchontoglires</taxon>
        <taxon>Glires</taxon>
        <taxon>Rodentia</taxon>
        <taxon>Myomorpha</taxon>
        <taxon>Muroidea</taxon>
        <taxon>Muridae</taxon>
        <taxon>Murinae</taxon>
        <taxon>Mus</taxon>
        <taxon>Mus</taxon>
    </lineage>
</organism>
<dbReference type="EMBL" id="AK006092">
    <property type="protein sequence ID" value="BAB24405.1"/>
    <property type="molecule type" value="mRNA"/>
</dbReference>
<dbReference type="EMBL" id="AC120785">
    <property type="status" value="NOT_ANNOTATED_CDS"/>
    <property type="molecule type" value="Genomic_DNA"/>
</dbReference>
<dbReference type="EMBL" id="CH466566">
    <property type="protein sequence ID" value="EDL22085.1"/>
    <property type="molecule type" value="Genomic_DNA"/>
</dbReference>
<dbReference type="EMBL" id="BC049746">
    <property type="protein sequence ID" value="AAH49746.1"/>
    <property type="molecule type" value="mRNA"/>
</dbReference>
<dbReference type="CCDS" id="CCDS22100.1"/>
<dbReference type="RefSeq" id="NP_083602.1">
    <property type="nucleotide sequence ID" value="NM_029326.1"/>
</dbReference>
<dbReference type="RefSeq" id="XP_006508983.1">
    <property type="nucleotide sequence ID" value="XM_006508920.3"/>
</dbReference>
<dbReference type="FunCoup" id="Q9DA77">
    <property type="interactions" value="3"/>
</dbReference>
<dbReference type="STRING" id="10090.ENSMUSP00000033909"/>
<dbReference type="PaxDb" id="10090-ENSMUSP00000033909"/>
<dbReference type="ProteomicsDB" id="262762"/>
<dbReference type="Antibodypedia" id="67738">
    <property type="antibodies" value="1 antibodies from 1 providers"/>
</dbReference>
<dbReference type="DNASU" id="75528"/>
<dbReference type="Ensembl" id="ENSMUST00000033909.14">
    <property type="protein sequence ID" value="ENSMUSP00000033909.8"/>
    <property type="gene ID" value="ENSMUSG00000031512.16"/>
</dbReference>
<dbReference type="Ensembl" id="ENSMUST00000166638.2">
    <property type="protein sequence ID" value="ENSMUSP00000132090.2"/>
    <property type="gene ID" value="ENSMUSG00000031512.16"/>
</dbReference>
<dbReference type="GeneID" id="75528"/>
<dbReference type="KEGG" id="mmu:75528"/>
<dbReference type="UCSC" id="uc009kvy.1">
    <property type="organism name" value="mouse"/>
</dbReference>
<dbReference type="AGR" id="MGI:1922778"/>
<dbReference type="CTD" id="121793"/>
<dbReference type="MGI" id="MGI:1922778">
    <property type="gene designation" value="Tex29"/>
</dbReference>
<dbReference type="VEuPathDB" id="HostDB:ENSMUSG00000031512"/>
<dbReference type="eggNOG" id="ENOG502RWPU">
    <property type="taxonomic scope" value="Eukaryota"/>
</dbReference>
<dbReference type="GeneTree" id="ENSGT00510000049560"/>
<dbReference type="HOGENOM" id="CLU_1453956_0_0_1"/>
<dbReference type="InParanoid" id="Q9DA77"/>
<dbReference type="OrthoDB" id="9028469at2759"/>
<dbReference type="TreeFam" id="TF337066"/>
<dbReference type="BioGRID-ORCS" id="75528">
    <property type="hits" value="2 hits in 76 CRISPR screens"/>
</dbReference>
<dbReference type="ChiTaRS" id="Tex29">
    <property type="organism name" value="mouse"/>
</dbReference>
<dbReference type="PRO" id="PR:Q9DA77"/>
<dbReference type="Proteomes" id="UP000000589">
    <property type="component" value="Chromosome 8"/>
</dbReference>
<dbReference type="RNAct" id="Q9DA77">
    <property type="molecule type" value="protein"/>
</dbReference>
<dbReference type="Bgee" id="ENSMUSG00000031512">
    <property type="expression patterns" value="Expressed in seminiferous tubule of testis and 20 other cell types or tissues"/>
</dbReference>
<dbReference type="ExpressionAtlas" id="Q9DA77">
    <property type="expression patterns" value="baseline and differential"/>
</dbReference>
<dbReference type="GO" id="GO:0016020">
    <property type="term" value="C:membrane"/>
    <property type="evidence" value="ECO:0007669"/>
    <property type="project" value="UniProtKB-SubCell"/>
</dbReference>
<dbReference type="InterPro" id="IPR031685">
    <property type="entry name" value="TEX29"/>
</dbReference>
<dbReference type="PANTHER" id="PTHR37339">
    <property type="entry name" value="TESTIS-EXPRESSED PROTEIN 29"/>
    <property type="match status" value="1"/>
</dbReference>
<dbReference type="PANTHER" id="PTHR37339:SF1">
    <property type="entry name" value="TESTIS-EXPRESSED PROTEIN 29"/>
    <property type="match status" value="1"/>
</dbReference>
<dbReference type="Pfam" id="PF15839">
    <property type="entry name" value="TEX29"/>
    <property type="match status" value="1"/>
</dbReference>
<gene>
    <name type="primary">Tex29</name>
</gene>
<accession>Q9DA77</accession>
<sequence length="186" mass="20894">MKDTKEIKRSPPHLLKKFAVCDIPLYDICDYNVTRERCRSLDCCFYRGVCYEKAVPIYVQVFFTLIWFVAGAFIIAVIYRVIQGTKKEKKPLLPEDSQVEILKSPTPELIPEPIPEPIPEPIPEPIREPPPPVKKTESPIEAGCCLWMKSKPAKDQPQKETAAPEPPSNPEVKKVNSGSAVPQAAP</sequence>
<comment type="subcellular location">
    <subcellularLocation>
        <location evidence="3">Membrane</location>
        <topology evidence="3">Single-pass membrane protein</topology>
    </subcellularLocation>
</comment>
<proteinExistence type="evidence at protein level"/>
<evidence type="ECO:0000255" key="1"/>
<evidence type="ECO:0000256" key="2">
    <source>
        <dbReference type="SAM" id="MobiDB-lite"/>
    </source>
</evidence>
<evidence type="ECO:0000305" key="3"/>
<reference key="1">
    <citation type="journal article" date="2005" name="Science">
        <title>The transcriptional landscape of the mammalian genome.</title>
        <authorList>
            <person name="Carninci P."/>
            <person name="Kasukawa T."/>
            <person name="Katayama S."/>
            <person name="Gough J."/>
            <person name="Frith M.C."/>
            <person name="Maeda N."/>
            <person name="Oyama R."/>
            <person name="Ravasi T."/>
            <person name="Lenhard B."/>
            <person name="Wells C."/>
            <person name="Kodzius R."/>
            <person name="Shimokawa K."/>
            <person name="Bajic V.B."/>
            <person name="Brenner S.E."/>
            <person name="Batalov S."/>
            <person name="Forrest A.R."/>
            <person name="Zavolan M."/>
            <person name="Davis M.J."/>
            <person name="Wilming L.G."/>
            <person name="Aidinis V."/>
            <person name="Allen J.E."/>
            <person name="Ambesi-Impiombato A."/>
            <person name="Apweiler R."/>
            <person name="Aturaliya R.N."/>
            <person name="Bailey T.L."/>
            <person name="Bansal M."/>
            <person name="Baxter L."/>
            <person name="Beisel K.W."/>
            <person name="Bersano T."/>
            <person name="Bono H."/>
            <person name="Chalk A.M."/>
            <person name="Chiu K.P."/>
            <person name="Choudhary V."/>
            <person name="Christoffels A."/>
            <person name="Clutterbuck D.R."/>
            <person name="Crowe M.L."/>
            <person name="Dalla E."/>
            <person name="Dalrymple B.P."/>
            <person name="de Bono B."/>
            <person name="Della Gatta G."/>
            <person name="di Bernardo D."/>
            <person name="Down T."/>
            <person name="Engstrom P."/>
            <person name="Fagiolini M."/>
            <person name="Faulkner G."/>
            <person name="Fletcher C.F."/>
            <person name="Fukushima T."/>
            <person name="Furuno M."/>
            <person name="Futaki S."/>
            <person name="Gariboldi M."/>
            <person name="Georgii-Hemming P."/>
            <person name="Gingeras T.R."/>
            <person name="Gojobori T."/>
            <person name="Green R.E."/>
            <person name="Gustincich S."/>
            <person name="Harbers M."/>
            <person name="Hayashi Y."/>
            <person name="Hensch T.K."/>
            <person name="Hirokawa N."/>
            <person name="Hill D."/>
            <person name="Huminiecki L."/>
            <person name="Iacono M."/>
            <person name="Ikeo K."/>
            <person name="Iwama A."/>
            <person name="Ishikawa T."/>
            <person name="Jakt M."/>
            <person name="Kanapin A."/>
            <person name="Katoh M."/>
            <person name="Kawasawa Y."/>
            <person name="Kelso J."/>
            <person name="Kitamura H."/>
            <person name="Kitano H."/>
            <person name="Kollias G."/>
            <person name="Krishnan S.P."/>
            <person name="Kruger A."/>
            <person name="Kummerfeld S.K."/>
            <person name="Kurochkin I.V."/>
            <person name="Lareau L.F."/>
            <person name="Lazarevic D."/>
            <person name="Lipovich L."/>
            <person name="Liu J."/>
            <person name="Liuni S."/>
            <person name="McWilliam S."/>
            <person name="Madan Babu M."/>
            <person name="Madera M."/>
            <person name="Marchionni L."/>
            <person name="Matsuda H."/>
            <person name="Matsuzawa S."/>
            <person name="Miki H."/>
            <person name="Mignone F."/>
            <person name="Miyake S."/>
            <person name="Morris K."/>
            <person name="Mottagui-Tabar S."/>
            <person name="Mulder N."/>
            <person name="Nakano N."/>
            <person name="Nakauchi H."/>
            <person name="Ng P."/>
            <person name="Nilsson R."/>
            <person name="Nishiguchi S."/>
            <person name="Nishikawa S."/>
            <person name="Nori F."/>
            <person name="Ohara O."/>
            <person name="Okazaki Y."/>
            <person name="Orlando V."/>
            <person name="Pang K.C."/>
            <person name="Pavan W.J."/>
            <person name="Pavesi G."/>
            <person name="Pesole G."/>
            <person name="Petrovsky N."/>
            <person name="Piazza S."/>
            <person name="Reed J."/>
            <person name="Reid J.F."/>
            <person name="Ring B.Z."/>
            <person name="Ringwald M."/>
            <person name="Rost B."/>
            <person name="Ruan Y."/>
            <person name="Salzberg S.L."/>
            <person name="Sandelin A."/>
            <person name="Schneider C."/>
            <person name="Schoenbach C."/>
            <person name="Sekiguchi K."/>
            <person name="Semple C.A."/>
            <person name="Seno S."/>
            <person name="Sessa L."/>
            <person name="Sheng Y."/>
            <person name="Shibata Y."/>
            <person name="Shimada H."/>
            <person name="Shimada K."/>
            <person name="Silva D."/>
            <person name="Sinclair B."/>
            <person name="Sperling S."/>
            <person name="Stupka E."/>
            <person name="Sugiura K."/>
            <person name="Sultana R."/>
            <person name="Takenaka Y."/>
            <person name="Taki K."/>
            <person name="Tammoja K."/>
            <person name="Tan S.L."/>
            <person name="Tang S."/>
            <person name="Taylor M.S."/>
            <person name="Tegner J."/>
            <person name="Teichmann S.A."/>
            <person name="Ueda H.R."/>
            <person name="van Nimwegen E."/>
            <person name="Verardo R."/>
            <person name="Wei C.L."/>
            <person name="Yagi K."/>
            <person name="Yamanishi H."/>
            <person name="Zabarovsky E."/>
            <person name="Zhu S."/>
            <person name="Zimmer A."/>
            <person name="Hide W."/>
            <person name="Bult C."/>
            <person name="Grimmond S.M."/>
            <person name="Teasdale R.D."/>
            <person name="Liu E.T."/>
            <person name="Brusic V."/>
            <person name="Quackenbush J."/>
            <person name="Wahlestedt C."/>
            <person name="Mattick J.S."/>
            <person name="Hume D.A."/>
            <person name="Kai C."/>
            <person name="Sasaki D."/>
            <person name="Tomaru Y."/>
            <person name="Fukuda S."/>
            <person name="Kanamori-Katayama M."/>
            <person name="Suzuki M."/>
            <person name="Aoki J."/>
            <person name="Arakawa T."/>
            <person name="Iida J."/>
            <person name="Imamura K."/>
            <person name="Itoh M."/>
            <person name="Kato T."/>
            <person name="Kawaji H."/>
            <person name="Kawagashira N."/>
            <person name="Kawashima T."/>
            <person name="Kojima M."/>
            <person name="Kondo S."/>
            <person name="Konno H."/>
            <person name="Nakano K."/>
            <person name="Ninomiya N."/>
            <person name="Nishio T."/>
            <person name="Okada M."/>
            <person name="Plessy C."/>
            <person name="Shibata K."/>
            <person name="Shiraki T."/>
            <person name="Suzuki S."/>
            <person name="Tagami M."/>
            <person name="Waki K."/>
            <person name="Watahiki A."/>
            <person name="Okamura-Oho Y."/>
            <person name="Suzuki H."/>
            <person name="Kawai J."/>
            <person name="Hayashizaki Y."/>
        </authorList>
    </citation>
    <scope>NUCLEOTIDE SEQUENCE [LARGE SCALE MRNA]</scope>
    <source>
        <strain>C57BL/6J</strain>
        <tissue>Testis</tissue>
    </source>
</reference>
<reference key="2">
    <citation type="journal article" date="2009" name="PLoS Biol.">
        <title>Lineage-specific biology revealed by a finished genome assembly of the mouse.</title>
        <authorList>
            <person name="Church D.M."/>
            <person name="Goodstadt L."/>
            <person name="Hillier L.W."/>
            <person name="Zody M.C."/>
            <person name="Goldstein S."/>
            <person name="She X."/>
            <person name="Bult C.J."/>
            <person name="Agarwala R."/>
            <person name="Cherry J.L."/>
            <person name="DiCuccio M."/>
            <person name="Hlavina W."/>
            <person name="Kapustin Y."/>
            <person name="Meric P."/>
            <person name="Maglott D."/>
            <person name="Birtle Z."/>
            <person name="Marques A.C."/>
            <person name="Graves T."/>
            <person name="Zhou S."/>
            <person name="Teague B."/>
            <person name="Potamousis K."/>
            <person name="Churas C."/>
            <person name="Place M."/>
            <person name="Herschleb J."/>
            <person name="Runnheim R."/>
            <person name="Forrest D."/>
            <person name="Amos-Landgraf J."/>
            <person name="Schwartz D.C."/>
            <person name="Cheng Z."/>
            <person name="Lindblad-Toh K."/>
            <person name="Eichler E.E."/>
            <person name="Ponting C.P."/>
        </authorList>
    </citation>
    <scope>NUCLEOTIDE SEQUENCE [LARGE SCALE GENOMIC DNA]</scope>
    <source>
        <strain>C57BL/6J</strain>
    </source>
</reference>
<reference key="3">
    <citation type="submission" date="2007-06" db="EMBL/GenBank/DDBJ databases">
        <authorList>
            <person name="Mural R.J."/>
            <person name="Adams M.D."/>
            <person name="Myers E.W."/>
            <person name="Smith H.O."/>
            <person name="Venter J.C."/>
        </authorList>
    </citation>
    <scope>NUCLEOTIDE SEQUENCE [LARGE SCALE GENOMIC DNA]</scope>
</reference>
<reference key="4">
    <citation type="journal article" date="2004" name="Genome Res.">
        <title>The status, quality, and expansion of the NIH full-length cDNA project: the Mammalian Gene Collection (MGC).</title>
        <authorList>
            <consortium name="The MGC Project Team"/>
        </authorList>
    </citation>
    <scope>NUCLEOTIDE SEQUENCE [LARGE SCALE MRNA]</scope>
    <source>
        <tissue>Testis</tissue>
    </source>
</reference>
<reference key="5">
    <citation type="journal article" date="2010" name="Cell">
        <title>A tissue-specific atlas of mouse protein phosphorylation and expression.</title>
        <authorList>
            <person name="Huttlin E.L."/>
            <person name="Jedrychowski M.P."/>
            <person name="Elias J.E."/>
            <person name="Goswami T."/>
            <person name="Rad R."/>
            <person name="Beausoleil S.A."/>
            <person name="Villen J."/>
            <person name="Haas W."/>
            <person name="Sowa M.E."/>
            <person name="Gygi S.P."/>
        </authorList>
    </citation>
    <scope>IDENTIFICATION BY MASS SPECTROMETRY [LARGE SCALE ANALYSIS]</scope>
    <source>
        <tissue>Testis</tissue>
    </source>
</reference>
<keyword id="KW-0472">Membrane</keyword>
<keyword id="KW-1185">Reference proteome</keyword>
<keyword id="KW-0812">Transmembrane</keyword>
<keyword id="KW-1133">Transmembrane helix</keyword>